<organism>
    <name type="scientific">Homo sapiens</name>
    <name type="common">Human</name>
    <dbReference type="NCBI Taxonomy" id="9606"/>
    <lineage>
        <taxon>Eukaryota</taxon>
        <taxon>Metazoa</taxon>
        <taxon>Chordata</taxon>
        <taxon>Craniata</taxon>
        <taxon>Vertebrata</taxon>
        <taxon>Euteleostomi</taxon>
        <taxon>Mammalia</taxon>
        <taxon>Eutheria</taxon>
        <taxon>Euarchontoglires</taxon>
        <taxon>Primates</taxon>
        <taxon>Haplorrhini</taxon>
        <taxon>Catarrhini</taxon>
        <taxon>Hominidae</taxon>
        <taxon>Homo</taxon>
    </lineage>
</organism>
<proteinExistence type="evidence at protein level"/>
<sequence length="10" mass="956">AGEPKLDAGV</sequence>
<feature type="peptide" id="PRO_0000044206" description="Pneumadin">
    <location>
        <begin position="1"/>
        <end position="10"/>
    </location>
</feature>
<feature type="modified residue" description="Valine amide" evidence="1">
    <location>
        <position position="10"/>
    </location>
</feature>
<accession>P22103</accession>
<evidence type="ECO:0000269" key="1">
    <source>
    </source>
</evidence>
<evidence type="ECO:0000305" key="2"/>
<protein>
    <recommendedName>
        <fullName>Pneumadin</fullName>
        <shortName>PNM</shortName>
    </recommendedName>
</protein>
<reference key="1">
    <citation type="journal article" date="1990" name="Regul. Pept.">
        <title>Pneumadin: a new lung peptide which triggers antidiuresis.</title>
        <authorList>
            <person name="Batra V.K."/>
            <person name="Mathur M."/>
            <person name="Mir S.A."/>
            <person name="Kapoor R."/>
            <person name="Kumar M.A."/>
        </authorList>
    </citation>
    <scope>PROTEIN SEQUENCE</scope>
    <scope>AMIDATION AT VAL-10</scope>
    <source>
        <tissue>Lung</tissue>
    </source>
</reference>
<comment type="function">
    <text>Antidiuretic peptide that triggers the release of ADH.</text>
</comment>
<comment type="caution">
    <text evidence="2">The peptide sequence has not been found in the complete proteome.</text>
</comment>
<dbReference type="PIR" id="B33143">
    <property type="entry name" value="B33143"/>
</dbReference>
<dbReference type="Pharos" id="P22103">
    <property type="development level" value="Tdark"/>
</dbReference>
<dbReference type="GO" id="GO:0030103">
    <property type="term" value="P:vasopressin secretion"/>
    <property type="evidence" value="ECO:0000303"/>
    <property type="project" value="UniProtKB"/>
</dbReference>
<name>PNEU_HUMAN</name>
<keyword id="KW-0027">Amidation</keyword>
<keyword id="KW-0903">Direct protein sequencing</keyword>